<organism>
    <name type="scientific">Saccharomyces cerevisiae (strain ATCC 204508 / S288c)</name>
    <name type="common">Baker's yeast</name>
    <dbReference type="NCBI Taxonomy" id="559292"/>
    <lineage>
        <taxon>Eukaryota</taxon>
        <taxon>Fungi</taxon>
        <taxon>Dikarya</taxon>
        <taxon>Ascomycota</taxon>
        <taxon>Saccharomycotina</taxon>
        <taxon>Saccharomycetes</taxon>
        <taxon>Saccharomycetales</taxon>
        <taxon>Saccharomycetaceae</taxon>
        <taxon>Saccharomyces</taxon>
    </lineage>
</organism>
<accession>P46943</accession>
<accession>D6VYT5</accession>
<accession>Q05891</accession>
<name>GUF1_YEAST</name>
<protein>
    <recommendedName>
        <fullName evidence="1">Translation factor GUF1, mitochondrial</fullName>
        <ecNumber>3.6.5.-</ecNumber>
    </recommendedName>
    <alternativeName>
        <fullName evidence="1">Elongation factor 4 homolog</fullName>
        <shortName evidence="1">EF-4</shortName>
    </alternativeName>
    <alternativeName>
        <fullName evidence="1">GTPase GUF1</fullName>
    </alternativeName>
    <alternativeName>
        <fullName evidence="1">Ribosomal back-translocase</fullName>
    </alternativeName>
</protein>
<gene>
    <name evidence="1" type="primary">GUF1</name>
    <name type="ordered locus">YLR289W</name>
    <name type="ORF">L8003.7</name>
</gene>
<feature type="chain" id="PRO_0000091560" description="Translation factor GUF1, mitochondrial">
    <location>
        <begin position="1"/>
        <end position="645"/>
    </location>
</feature>
<feature type="domain" description="tr-type G">
    <location>
        <begin position="44"/>
        <end position="228"/>
    </location>
</feature>
<feature type="binding site" evidence="1">
    <location>
        <begin position="53"/>
        <end position="60"/>
    </location>
    <ligand>
        <name>GTP</name>
        <dbReference type="ChEBI" id="CHEBI:37565"/>
    </ligand>
</feature>
<feature type="binding site" evidence="1">
    <location>
        <begin position="120"/>
        <end position="124"/>
    </location>
    <ligand>
        <name>GTP</name>
        <dbReference type="ChEBI" id="CHEBI:37565"/>
    </ligand>
</feature>
<feature type="binding site" evidence="1">
    <location>
        <begin position="174"/>
        <end position="177"/>
    </location>
    <ligand>
        <name>GTP</name>
        <dbReference type="ChEBI" id="CHEBI:37565"/>
    </ligand>
</feature>
<feature type="sequence conflict" description="In Ref. 1; AAA96351." evidence="6" ref="1">
    <original>S</original>
    <variation>F</variation>
    <location>
        <position position="260"/>
    </location>
</feature>
<feature type="sequence conflict" description="In Ref. 1; AAA96351." evidence="6" ref="1">
    <original>A</original>
    <variation>P</variation>
    <location>
        <position position="354"/>
    </location>
</feature>
<feature type="sequence conflict" description="In Ref. 1; AAA96351." evidence="6" ref="1">
    <original>E</original>
    <variation>Q</variation>
    <location>
        <position position="374"/>
    </location>
</feature>
<feature type="sequence conflict" description="In Ref. 1; AAA96351." evidence="6" ref="1">
    <original>G</original>
    <variation>R</variation>
    <location>
        <position position="559"/>
    </location>
</feature>
<evidence type="ECO:0000255" key="1">
    <source>
        <dbReference type="HAMAP-Rule" id="MF_03137"/>
    </source>
</evidence>
<evidence type="ECO:0000269" key="2">
    <source>
    </source>
</evidence>
<evidence type="ECO:0000269" key="3">
    <source>
    </source>
</evidence>
<evidence type="ECO:0000269" key="4">
    <source>
    </source>
</evidence>
<evidence type="ECO:0000269" key="5">
    <source>
    </source>
</evidence>
<evidence type="ECO:0000305" key="6"/>
<comment type="function">
    <text evidence="1 5">Promotes mitochondrial protein synthesis. May act as a fidelity factor of the translation reaction, by catalyzing a one-codon backward translocation of tRNAs on improperly translocated ribosomes. Binds to mitochondrial ribosomes in a GTP-dependent manner.</text>
</comment>
<comment type="catalytic activity">
    <reaction evidence="1 4">
        <text>GTP + H2O = GDP + phosphate + H(+)</text>
        <dbReference type="Rhea" id="RHEA:19669"/>
        <dbReference type="ChEBI" id="CHEBI:15377"/>
        <dbReference type="ChEBI" id="CHEBI:15378"/>
        <dbReference type="ChEBI" id="CHEBI:37565"/>
        <dbReference type="ChEBI" id="CHEBI:43474"/>
        <dbReference type="ChEBI" id="CHEBI:58189"/>
    </reaction>
</comment>
<comment type="subcellular location">
    <subcellularLocation>
        <location evidence="1 2 5">Mitochondrion inner membrane</location>
        <topology evidence="1 2 5">Peripheral membrane protein</topology>
        <orientation evidence="1 2 5">Matrix side</orientation>
    </subcellularLocation>
</comment>
<comment type="miscellaneous">
    <text evidence="3">Present with 1890 molecules/cell in log phase SD medium.</text>
</comment>
<comment type="miscellaneous">
    <text evidence="1">This protein may be expected to contain an N-terminal transit peptide but none has been predicted.</text>
</comment>
<comment type="similarity">
    <text evidence="6">Belongs to the TRAFAC class translation factor GTPase superfamily. Classic translation factor GTPase family. LepA subfamily.</text>
</comment>
<comment type="sequence caution" evidence="6">
    <conflict type="frameshift">
        <sequence resource="EMBL-CDS" id="AAA96351"/>
    </conflict>
</comment>
<sequence length="645" mass="73188">MLKFRIRPVRHIRCYKRHAYFLRYNHTTTPAQKLQAQIEQIPLENYRNFSIVAHVDHGKSTLSDRLLEITHVIDPNARNKQVLDKLEVERERGITIKAQTCSMFYKDKRTGKNYLLHLIDTPGHVDFRGEVSRSYASCGGAILLVDASQGIQAQTVANFYLAFSLGLKLIPVINKIDLNFTDVKQVKDQIVNNFELPEEDIIGVSAKTGLNVEELLLPAIIDRIPPPTGRPDKPFRALLVDSWYDAYLGAVLLVNIVDGSVRKNDKVICAQTKEKYEVKDIGIMYPDRTSTGTLKTGQVGYLVLGMKDSKEAKIGDTIMHLSKVNETEVLPGFEEQKPMVFVGAFPADGIEFKAMDDDMSRLVLNDRSVTLERETSNALGQGWRLGFLGSLHASVFRERLEKEYGSKLIITQPTVPYLVEFTDGKKKLITNPDEFPDGATKRVNVAAFHEPFIEAVMTLPQEYLGSVIRLCDSNRGEQIDITYLNTNGQVMLKYYLPLSHLVDDFFGKLKSVSRGFASLDYEDAGYRISDVVKLQLLVNGNAIDALSRVLHKSEVERVGREWVKKFKEYVKSQLYEVVIQARANNKIIARETIKARRKDVLQKLHASDVSRRKKLLAKQKEGKKHMKTVGNIQINQEAYQAFLRR</sequence>
<keyword id="KW-0342">GTP-binding</keyword>
<keyword id="KW-0378">Hydrolase</keyword>
<keyword id="KW-0472">Membrane</keyword>
<keyword id="KW-0496">Mitochondrion</keyword>
<keyword id="KW-0999">Mitochondrion inner membrane</keyword>
<keyword id="KW-0547">Nucleotide-binding</keyword>
<keyword id="KW-0648">Protein biosynthesis</keyword>
<keyword id="KW-1185">Reference proteome</keyword>
<dbReference type="EC" id="3.6.5.-"/>
<dbReference type="EMBL" id="U22360">
    <property type="protein sequence ID" value="AAA96351.1"/>
    <property type="status" value="ALT_FRAME"/>
    <property type="molecule type" value="Genomic_DNA"/>
</dbReference>
<dbReference type="EMBL" id="U17243">
    <property type="protein sequence ID" value="AAB67335.1"/>
    <property type="molecule type" value="Genomic_DNA"/>
</dbReference>
<dbReference type="EMBL" id="BK006945">
    <property type="protein sequence ID" value="DAA09601.1"/>
    <property type="molecule type" value="Genomic_DNA"/>
</dbReference>
<dbReference type="PIR" id="S50374">
    <property type="entry name" value="S50374"/>
</dbReference>
<dbReference type="RefSeq" id="NP_013392.1">
    <property type="nucleotide sequence ID" value="NM_001182177.1"/>
</dbReference>
<dbReference type="SMR" id="P46943"/>
<dbReference type="BioGRID" id="31555">
    <property type="interactions" value="62"/>
</dbReference>
<dbReference type="DIP" id="DIP-2842N"/>
<dbReference type="FunCoup" id="P46943">
    <property type="interactions" value="839"/>
</dbReference>
<dbReference type="IntAct" id="P46943">
    <property type="interactions" value="5"/>
</dbReference>
<dbReference type="MINT" id="P46943"/>
<dbReference type="STRING" id="4932.YLR289W"/>
<dbReference type="BindingDB" id="P46943"/>
<dbReference type="ChEMBL" id="CHEMBL1250406"/>
<dbReference type="PaxDb" id="4932-YLR289W"/>
<dbReference type="PeptideAtlas" id="P46943"/>
<dbReference type="EnsemblFungi" id="YLR289W_mRNA">
    <property type="protein sequence ID" value="YLR289W"/>
    <property type="gene ID" value="YLR289W"/>
</dbReference>
<dbReference type="GeneID" id="850996"/>
<dbReference type="KEGG" id="sce:YLR289W"/>
<dbReference type="AGR" id="SGD:S000004280"/>
<dbReference type="SGD" id="S000004280">
    <property type="gene designation" value="GUF1"/>
</dbReference>
<dbReference type="VEuPathDB" id="FungiDB:YLR289W"/>
<dbReference type="eggNOG" id="KOG0462">
    <property type="taxonomic scope" value="Eukaryota"/>
</dbReference>
<dbReference type="GeneTree" id="ENSGT00550000074940"/>
<dbReference type="HOGENOM" id="CLU_009995_3_1_1"/>
<dbReference type="InParanoid" id="P46943"/>
<dbReference type="OMA" id="QVKCDEN"/>
<dbReference type="OrthoDB" id="1074at2759"/>
<dbReference type="BioCyc" id="YEAST:G3O-32384-MONOMER"/>
<dbReference type="BioGRID-ORCS" id="850996">
    <property type="hits" value="2 hits in 10 CRISPR screens"/>
</dbReference>
<dbReference type="PRO" id="PR:P46943"/>
<dbReference type="Proteomes" id="UP000002311">
    <property type="component" value="Chromosome XII"/>
</dbReference>
<dbReference type="RNAct" id="P46943">
    <property type="molecule type" value="protein"/>
</dbReference>
<dbReference type="GO" id="GO:0005743">
    <property type="term" value="C:mitochondrial inner membrane"/>
    <property type="evidence" value="ECO:0007669"/>
    <property type="project" value="UniProtKB-SubCell"/>
</dbReference>
<dbReference type="GO" id="GO:0005759">
    <property type="term" value="C:mitochondrial matrix"/>
    <property type="evidence" value="ECO:0000314"/>
    <property type="project" value="SGD"/>
</dbReference>
<dbReference type="GO" id="GO:0005739">
    <property type="term" value="C:mitochondrion"/>
    <property type="evidence" value="ECO:0007005"/>
    <property type="project" value="SGD"/>
</dbReference>
<dbReference type="GO" id="GO:0005634">
    <property type="term" value="C:nucleus"/>
    <property type="evidence" value="ECO:0007005"/>
    <property type="project" value="SGD"/>
</dbReference>
<dbReference type="GO" id="GO:0005525">
    <property type="term" value="F:GTP binding"/>
    <property type="evidence" value="ECO:0007669"/>
    <property type="project" value="UniProtKB-UniRule"/>
</dbReference>
<dbReference type="GO" id="GO:0003924">
    <property type="term" value="F:GTPase activity"/>
    <property type="evidence" value="ECO:0000314"/>
    <property type="project" value="SGD"/>
</dbReference>
<dbReference type="GO" id="GO:0097177">
    <property type="term" value="F:mitochondrial ribosome binding"/>
    <property type="evidence" value="ECO:0000314"/>
    <property type="project" value="SGD"/>
</dbReference>
<dbReference type="GO" id="GO:0045727">
    <property type="term" value="P:positive regulation of translation"/>
    <property type="evidence" value="ECO:0000315"/>
    <property type="project" value="SGD"/>
</dbReference>
<dbReference type="GO" id="GO:0006412">
    <property type="term" value="P:translation"/>
    <property type="evidence" value="ECO:0007669"/>
    <property type="project" value="UniProtKB-KW"/>
</dbReference>
<dbReference type="CDD" id="cd03699">
    <property type="entry name" value="EF4_II"/>
    <property type="match status" value="1"/>
</dbReference>
<dbReference type="CDD" id="cd16260">
    <property type="entry name" value="EF4_III"/>
    <property type="match status" value="1"/>
</dbReference>
<dbReference type="CDD" id="cd01890">
    <property type="entry name" value="LepA"/>
    <property type="match status" value="1"/>
</dbReference>
<dbReference type="CDD" id="cd03709">
    <property type="entry name" value="lepA_C"/>
    <property type="match status" value="1"/>
</dbReference>
<dbReference type="FunFam" id="3.40.50.300:FF:000078">
    <property type="entry name" value="Elongation factor 4"/>
    <property type="match status" value="1"/>
</dbReference>
<dbReference type="FunFam" id="2.40.30.10:FF:000015">
    <property type="entry name" value="Translation factor GUF1, mitochondrial"/>
    <property type="match status" value="1"/>
</dbReference>
<dbReference type="FunFam" id="3.30.70.240:FF:000007">
    <property type="entry name" value="Translation factor GUF1, mitochondrial"/>
    <property type="match status" value="1"/>
</dbReference>
<dbReference type="FunFam" id="3.30.70.2570:FF:000001">
    <property type="entry name" value="Translation factor GUF1, mitochondrial"/>
    <property type="match status" value="1"/>
</dbReference>
<dbReference type="FunFam" id="3.30.70.870:FF:000004">
    <property type="entry name" value="Translation factor GUF1, mitochondrial"/>
    <property type="match status" value="1"/>
</dbReference>
<dbReference type="Gene3D" id="3.30.70.240">
    <property type="match status" value="1"/>
</dbReference>
<dbReference type="Gene3D" id="3.30.70.2570">
    <property type="entry name" value="Elongation factor 4, C-terminal domain"/>
    <property type="match status" value="1"/>
</dbReference>
<dbReference type="Gene3D" id="3.30.70.870">
    <property type="entry name" value="Elongation Factor G (Translational Gtpase), domain 3"/>
    <property type="match status" value="1"/>
</dbReference>
<dbReference type="Gene3D" id="3.40.50.300">
    <property type="entry name" value="P-loop containing nucleotide triphosphate hydrolases"/>
    <property type="match status" value="1"/>
</dbReference>
<dbReference type="Gene3D" id="2.40.30.10">
    <property type="entry name" value="Translation factors"/>
    <property type="match status" value="1"/>
</dbReference>
<dbReference type="HAMAP" id="MF_00071">
    <property type="entry name" value="LepA"/>
    <property type="match status" value="1"/>
</dbReference>
<dbReference type="InterPro" id="IPR006297">
    <property type="entry name" value="EF-4"/>
</dbReference>
<dbReference type="InterPro" id="IPR035647">
    <property type="entry name" value="EFG_III/V"/>
</dbReference>
<dbReference type="InterPro" id="IPR000640">
    <property type="entry name" value="EFG_V-like"/>
</dbReference>
<dbReference type="InterPro" id="IPR004161">
    <property type="entry name" value="EFTu-like_2"/>
</dbReference>
<dbReference type="InterPro" id="IPR031157">
    <property type="entry name" value="G_TR_CS"/>
</dbReference>
<dbReference type="InterPro" id="IPR038363">
    <property type="entry name" value="LepA_C_sf"/>
</dbReference>
<dbReference type="InterPro" id="IPR013842">
    <property type="entry name" value="LepA_CTD"/>
</dbReference>
<dbReference type="InterPro" id="IPR035654">
    <property type="entry name" value="LepA_IV"/>
</dbReference>
<dbReference type="InterPro" id="IPR027417">
    <property type="entry name" value="P-loop_NTPase"/>
</dbReference>
<dbReference type="InterPro" id="IPR005225">
    <property type="entry name" value="Small_GTP-bd"/>
</dbReference>
<dbReference type="InterPro" id="IPR000795">
    <property type="entry name" value="T_Tr_GTP-bd_dom"/>
</dbReference>
<dbReference type="NCBIfam" id="TIGR01393">
    <property type="entry name" value="lepA"/>
    <property type="match status" value="1"/>
</dbReference>
<dbReference type="NCBIfam" id="TIGR00231">
    <property type="entry name" value="small_GTP"/>
    <property type="match status" value="1"/>
</dbReference>
<dbReference type="PANTHER" id="PTHR43512:SF7">
    <property type="entry name" value="TRANSLATION FACTOR GUF1, MITOCHONDRIAL"/>
    <property type="match status" value="1"/>
</dbReference>
<dbReference type="PANTHER" id="PTHR43512">
    <property type="entry name" value="TRANSLATION FACTOR GUF1-RELATED"/>
    <property type="match status" value="1"/>
</dbReference>
<dbReference type="Pfam" id="PF00679">
    <property type="entry name" value="EFG_C"/>
    <property type="match status" value="1"/>
</dbReference>
<dbReference type="Pfam" id="PF00009">
    <property type="entry name" value="GTP_EFTU"/>
    <property type="match status" value="1"/>
</dbReference>
<dbReference type="Pfam" id="PF03144">
    <property type="entry name" value="GTP_EFTU_D2"/>
    <property type="match status" value="1"/>
</dbReference>
<dbReference type="Pfam" id="PF06421">
    <property type="entry name" value="LepA_C"/>
    <property type="match status" value="1"/>
</dbReference>
<dbReference type="PRINTS" id="PR00315">
    <property type="entry name" value="ELONGATNFCT"/>
</dbReference>
<dbReference type="SUPFAM" id="SSF54980">
    <property type="entry name" value="EF-G C-terminal domain-like"/>
    <property type="match status" value="2"/>
</dbReference>
<dbReference type="SUPFAM" id="SSF52540">
    <property type="entry name" value="P-loop containing nucleoside triphosphate hydrolases"/>
    <property type="match status" value="1"/>
</dbReference>
<dbReference type="PROSITE" id="PS00301">
    <property type="entry name" value="G_TR_1"/>
    <property type="match status" value="1"/>
</dbReference>
<dbReference type="PROSITE" id="PS51722">
    <property type="entry name" value="G_TR_2"/>
    <property type="match status" value="1"/>
</dbReference>
<reference key="1">
    <citation type="journal article" date="1995" name="Yeast">
        <title>GUF1, a gene encoding a novel evolutionarily conserved GTPase in budding yeast.</title>
        <authorList>
            <person name="Kiser G.L."/>
            <person name="Weinert T.L."/>
        </authorList>
    </citation>
    <scope>NUCLEOTIDE SEQUENCE [GENOMIC DNA]</scope>
    <source>
        <strain>ATCC 204626 / S288c / A364A</strain>
    </source>
</reference>
<reference key="2">
    <citation type="journal article" date="1997" name="Nature">
        <title>The nucleotide sequence of Saccharomyces cerevisiae chromosome XII.</title>
        <authorList>
            <person name="Johnston M."/>
            <person name="Hillier L.W."/>
            <person name="Riles L."/>
            <person name="Albermann K."/>
            <person name="Andre B."/>
            <person name="Ansorge W."/>
            <person name="Benes V."/>
            <person name="Brueckner M."/>
            <person name="Delius H."/>
            <person name="Dubois E."/>
            <person name="Duesterhoeft A."/>
            <person name="Entian K.-D."/>
            <person name="Floeth M."/>
            <person name="Goffeau A."/>
            <person name="Hebling U."/>
            <person name="Heumann K."/>
            <person name="Heuss-Neitzel D."/>
            <person name="Hilbert H."/>
            <person name="Hilger F."/>
            <person name="Kleine K."/>
            <person name="Koetter P."/>
            <person name="Louis E.J."/>
            <person name="Messenguy F."/>
            <person name="Mewes H.-W."/>
            <person name="Miosga T."/>
            <person name="Moestl D."/>
            <person name="Mueller-Auer S."/>
            <person name="Nentwich U."/>
            <person name="Obermaier B."/>
            <person name="Piravandi E."/>
            <person name="Pohl T.M."/>
            <person name="Portetelle D."/>
            <person name="Purnelle B."/>
            <person name="Rechmann S."/>
            <person name="Rieger M."/>
            <person name="Rinke M."/>
            <person name="Rose M."/>
            <person name="Scharfe M."/>
            <person name="Scherens B."/>
            <person name="Scholler P."/>
            <person name="Schwager C."/>
            <person name="Schwarz S."/>
            <person name="Underwood A.P."/>
            <person name="Urrestarazu L.A."/>
            <person name="Vandenbol M."/>
            <person name="Verhasselt P."/>
            <person name="Vierendeels F."/>
            <person name="Voet M."/>
            <person name="Volckaert G."/>
            <person name="Voss H."/>
            <person name="Wambutt R."/>
            <person name="Wedler E."/>
            <person name="Wedler H."/>
            <person name="Zimmermann F.K."/>
            <person name="Zollner A."/>
            <person name="Hani J."/>
            <person name="Hoheisel J.D."/>
        </authorList>
    </citation>
    <scope>NUCLEOTIDE SEQUENCE [LARGE SCALE GENOMIC DNA]</scope>
    <source>
        <strain>ATCC 204508 / S288c</strain>
    </source>
</reference>
<reference key="3">
    <citation type="journal article" date="2014" name="G3 (Bethesda)">
        <title>The reference genome sequence of Saccharomyces cerevisiae: Then and now.</title>
        <authorList>
            <person name="Engel S.R."/>
            <person name="Dietrich F.S."/>
            <person name="Fisk D.G."/>
            <person name="Binkley G."/>
            <person name="Balakrishnan R."/>
            <person name="Costanzo M.C."/>
            <person name="Dwight S.S."/>
            <person name="Hitz B.C."/>
            <person name="Karra K."/>
            <person name="Nash R.S."/>
            <person name="Weng S."/>
            <person name="Wong E.D."/>
            <person name="Lloyd P."/>
            <person name="Skrzypek M.S."/>
            <person name="Miyasato S.R."/>
            <person name="Simison M."/>
            <person name="Cherry J.M."/>
        </authorList>
    </citation>
    <scope>GENOME REANNOTATION</scope>
    <source>
        <strain>ATCC 204508 / S288c</strain>
    </source>
</reference>
<reference key="4">
    <citation type="journal article" date="2003" name="Nature">
        <title>Global analysis of protein localization in budding yeast.</title>
        <authorList>
            <person name="Huh W.-K."/>
            <person name="Falvo J.V."/>
            <person name="Gerke L.C."/>
            <person name="Carroll A.S."/>
            <person name="Howson R.W."/>
            <person name="Weissman J.S."/>
            <person name="O'Shea E.K."/>
        </authorList>
    </citation>
    <scope>SUBCELLULAR LOCATION [LARGE SCALE ANALYSIS]</scope>
</reference>
<reference key="5">
    <citation type="journal article" date="2003" name="Nature">
        <title>Global analysis of protein expression in yeast.</title>
        <authorList>
            <person name="Ghaemmaghami S."/>
            <person name="Huh W.-K."/>
            <person name="Bower K."/>
            <person name="Howson R.W."/>
            <person name="Belle A."/>
            <person name="Dephoure N."/>
            <person name="O'Shea E.K."/>
            <person name="Weissman J.S."/>
        </authorList>
    </citation>
    <scope>LEVEL OF PROTEIN EXPRESSION [LARGE SCALE ANALYSIS]</scope>
</reference>
<reference key="6">
    <citation type="journal article" date="2006" name="Nat. Chem. Biol.">
        <title>Microarray-based method for monitoring yeast overexpression strains reveals small-molecule targets in TOR pathway.</title>
        <authorList>
            <person name="Butcher R.A."/>
            <person name="Bhullar B.S."/>
            <person name="Perlstein E.O."/>
            <person name="Marsischky G."/>
            <person name="LaBaer J."/>
            <person name="Schreiber S.L."/>
        </authorList>
    </citation>
    <scope>CATALYTIC ACTIVITY</scope>
</reference>
<reference key="7">
    <citation type="journal article" date="2008" name="J. Biol. Chem.">
        <title>The membrane-bound GTPase Guf1 promotes mitochondrial protein synthesis under suboptimal conditions.</title>
        <authorList>
            <person name="Bauerschmitt H."/>
            <person name="Funes S."/>
            <person name="Herrmann J.M."/>
        </authorList>
    </citation>
    <scope>FUNCTION</scope>
    <scope>SUBCELLULAR LOCATION</scope>
</reference>
<proteinExistence type="evidence at protein level"/>